<reference key="1">
    <citation type="journal article" date="2006" name="Genome Biol.">
        <title>The genome of Rhizobium leguminosarum has recognizable core and accessory components.</title>
        <authorList>
            <person name="Young J.P.W."/>
            <person name="Crossman L.C."/>
            <person name="Johnston A.W.B."/>
            <person name="Thomson N.R."/>
            <person name="Ghazoui Z.F."/>
            <person name="Hull K.H."/>
            <person name="Wexler M."/>
            <person name="Curson A.R.J."/>
            <person name="Todd J.D."/>
            <person name="Poole P.S."/>
            <person name="Mauchline T.H."/>
            <person name="East A.K."/>
            <person name="Quail M.A."/>
            <person name="Churcher C."/>
            <person name="Arrowsmith C."/>
            <person name="Cherevach I."/>
            <person name="Chillingworth T."/>
            <person name="Clarke K."/>
            <person name="Cronin A."/>
            <person name="Davis P."/>
            <person name="Fraser A."/>
            <person name="Hance Z."/>
            <person name="Hauser H."/>
            <person name="Jagels K."/>
            <person name="Moule S."/>
            <person name="Mungall K."/>
            <person name="Norbertczak H."/>
            <person name="Rabbinowitsch E."/>
            <person name="Sanders M."/>
            <person name="Simmonds M."/>
            <person name="Whitehead S."/>
            <person name="Parkhill J."/>
        </authorList>
    </citation>
    <scope>NUCLEOTIDE SEQUENCE [LARGE SCALE GENOMIC DNA]</scope>
    <source>
        <strain>DSM 114642 / LMG 32736 / 3841</strain>
    </source>
</reference>
<name>PRMA_RHIJ3</name>
<evidence type="ECO:0000255" key="1">
    <source>
        <dbReference type="HAMAP-Rule" id="MF_00735"/>
    </source>
</evidence>
<dbReference type="EC" id="2.1.1.-" evidence="1"/>
<dbReference type="EMBL" id="AM236080">
    <property type="protein sequence ID" value="CAK08774.1"/>
    <property type="molecule type" value="Genomic_DNA"/>
</dbReference>
<dbReference type="RefSeq" id="WP_011652780.1">
    <property type="nucleotide sequence ID" value="NC_008380.1"/>
</dbReference>
<dbReference type="SMR" id="Q1ME53"/>
<dbReference type="EnsemblBacteria" id="CAK08774">
    <property type="protein sequence ID" value="CAK08774"/>
    <property type="gene ID" value="RL3287"/>
</dbReference>
<dbReference type="KEGG" id="rle:RL3287"/>
<dbReference type="eggNOG" id="COG2264">
    <property type="taxonomic scope" value="Bacteria"/>
</dbReference>
<dbReference type="HOGENOM" id="CLU_049382_3_0_5"/>
<dbReference type="Proteomes" id="UP000006575">
    <property type="component" value="Chromosome"/>
</dbReference>
<dbReference type="GO" id="GO:0005737">
    <property type="term" value="C:cytoplasm"/>
    <property type="evidence" value="ECO:0007669"/>
    <property type="project" value="UniProtKB-SubCell"/>
</dbReference>
<dbReference type="GO" id="GO:0016279">
    <property type="term" value="F:protein-lysine N-methyltransferase activity"/>
    <property type="evidence" value="ECO:0007669"/>
    <property type="project" value="RHEA"/>
</dbReference>
<dbReference type="GO" id="GO:0032259">
    <property type="term" value="P:methylation"/>
    <property type="evidence" value="ECO:0007669"/>
    <property type="project" value="UniProtKB-KW"/>
</dbReference>
<dbReference type="CDD" id="cd02440">
    <property type="entry name" value="AdoMet_MTases"/>
    <property type="match status" value="1"/>
</dbReference>
<dbReference type="Gene3D" id="3.40.50.150">
    <property type="entry name" value="Vaccinia Virus protein VP39"/>
    <property type="match status" value="1"/>
</dbReference>
<dbReference type="HAMAP" id="MF_00735">
    <property type="entry name" value="Methyltr_PrmA"/>
    <property type="match status" value="1"/>
</dbReference>
<dbReference type="InterPro" id="IPR050078">
    <property type="entry name" value="Ribosomal_L11_MeTrfase_PrmA"/>
</dbReference>
<dbReference type="InterPro" id="IPR004498">
    <property type="entry name" value="Ribosomal_PrmA_MeTrfase"/>
</dbReference>
<dbReference type="InterPro" id="IPR029063">
    <property type="entry name" value="SAM-dependent_MTases_sf"/>
</dbReference>
<dbReference type="NCBIfam" id="NF001784">
    <property type="entry name" value="PRK00517.2-1"/>
    <property type="match status" value="1"/>
</dbReference>
<dbReference type="PANTHER" id="PTHR43648">
    <property type="entry name" value="ELECTRON TRANSFER FLAVOPROTEIN BETA SUBUNIT LYSINE METHYLTRANSFERASE"/>
    <property type="match status" value="1"/>
</dbReference>
<dbReference type="PANTHER" id="PTHR43648:SF1">
    <property type="entry name" value="ELECTRON TRANSFER FLAVOPROTEIN BETA SUBUNIT LYSINE METHYLTRANSFERASE"/>
    <property type="match status" value="1"/>
</dbReference>
<dbReference type="Pfam" id="PF06325">
    <property type="entry name" value="PrmA"/>
    <property type="match status" value="1"/>
</dbReference>
<dbReference type="PIRSF" id="PIRSF000401">
    <property type="entry name" value="RPL11_MTase"/>
    <property type="match status" value="1"/>
</dbReference>
<dbReference type="SUPFAM" id="SSF53335">
    <property type="entry name" value="S-adenosyl-L-methionine-dependent methyltransferases"/>
    <property type="match status" value="1"/>
</dbReference>
<comment type="function">
    <text evidence="1">Methylates ribosomal protein L11.</text>
</comment>
<comment type="catalytic activity">
    <reaction evidence="1">
        <text>L-lysyl-[protein] + 3 S-adenosyl-L-methionine = N(6),N(6),N(6)-trimethyl-L-lysyl-[protein] + 3 S-adenosyl-L-homocysteine + 3 H(+)</text>
        <dbReference type="Rhea" id="RHEA:54192"/>
        <dbReference type="Rhea" id="RHEA-COMP:9752"/>
        <dbReference type="Rhea" id="RHEA-COMP:13826"/>
        <dbReference type="ChEBI" id="CHEBI:15378"/>
        <dbReference type="ChEBI" id="CHEBI:29969"/>
        <dbReference type="ChEBI" id="CHEBI:57856"/>
        <dbReference type="ChEBI" id="CHEBI:59789"/>
        <dbReference type="ChEBI" id="CHEBI:61961"/>
    </reaction>
</comment>
<comment type="subcellular location">
    <subcellularLocation>
        <location evidence="1">Cytoplasm</location>
    </subcellularLocation>
</comment>
<comment type="similarity">
    <text evidence="1">Belongs to the methyltransferase superfamily. PrmA family.</text>
</comment>
<keyword id="KW-0963">Cytoplasm</keyword>
<keyword id="KW-0489">Methyltransferase</keyword>
<keyword id="KW-0949">S-adenosyl-L-methionine</keyword>
<keyword id="KW-0808">Transferase</keyword>
<gene>
    <name evidence="1" type="primary">prmA</name>
    <name type="ordered locus">RL3287</name>
</gene>
<protein>
    <recommendedName>
        <fullName evidence="1">Ribosomal protein L11 methyltransferase</fullName>
        <shortName evidence="1">L11 Mtase</shortName>
        <ecNumber evidence="1">2.1.1.-</ecNumber>
    </recommendedName>
</protein>
<feature type="chain" id="PRO_1000046079" description="Ribosomal protein L11 methyltransferase">
    <location>
        <begin position="1"/>
        <end position="292"/>
    </location>
</feature>
<feature type="binding site" evidence="1">
    <location>
        <position position="136"/>
    </location>
    <ligand>
        <name>S-adenosyl-L-methionine</name>
        <dbReference type="ChEBI" id="CHEBI:59789"/>
    </ligand>
</feature>
<feature type="binding site" evidence="1">
    <location>
        <position position="159"/>
    </location>
    <ligand>
        <name>S-adenosyl-L-methionine</name>
        <dbReference type="ChEBI" id="CHEBI:59789"/>
    </ligand>
</feature>
<feature type="binding site" evidence="1">
    <location>
        <position position="181"/>
    </location>
    <ligand>
        <name>S-adenosyl-L-methionine</name>
        <dbReference type="ChEBI" id="CHEBI:59789"/>
    </ligand>
</feature>
<feature type="binding site" evidence="1">
    <location>
        <position position="228"/>
    </location>
    <ligand>
        <name>S-adenosyl-L-methionine</name>
        <dbReference type="ChEBI" id="CHEBI:59789"/>
    </ligand>
</feature>
<sequence length="292" mass="31799">MSEIRLYVTTTEAKAEEILDLLSALFGEEDFAIGTTEIDEKKDIWEASIYMMAEDEAEVQSRVEDALKASFPDARLEREVIPEIDWVVKSLEGLKPVRAGRFLVHGSHDRDKIRPGDIAIEIDAGQAFGTGHHGTTAGCLEVIDSVVRSRPVRNALDLGTGSGVLAIAVRKLRNIPVLATDIDPIATKVAAENVRRNGIASGIVTRTAPGFHSTAFSEHGPFDLIIANILARPLIRMAPKLATHLAPGGSVILSGILAGQRWKVIAAYSGARLRHVKTIWRNGWVTIHLDRP</sequence>
<proteinExistence type="inferred from homology"/>
<organism>
    <name type="scientific">Rhizobium johnstonii (strain DSM 114642 / LMG 32736 / 3841)</name>
    <name type="common">Rhizobium leguminosarum bv. viciae</name>
    <dbReference type="NCBI Taxonomy" id="216596"/>
    <lineage>
        <taxon>Bacteria</taxon>
        <taxon>Pseudomonadati</taxon>
        <taxon>Pseudomonadota</taxon>
        <taxon>Alphaproteobacteria</taxon>
        <taxon>Hyphomicrobiales</taxon>
        <taxon>Rhizobiaceae</taxon>
        <taxon>Rhizobium/Agrobacterium group</taxon>
        <taxon>Rhizobium</taxon>
        <taxon>Rhizobium johnstonii</taxon>
    </lineage>
</organism>
<accession>Q1ME53</accession>